<comment type="function">
    <text evidence="4 5 7">Mitochondrial glutamate dehydrogenase that converts L-glutamate into alpha-ketoglutarate. Plays a key role in glutamine anaplerosis by producing alpha-ketoglutarate, an important intermediate in the tricarboxylic acid cycle (PubMed:8240242). Plays a role in insulin homeostasis (By similarity). May be involved in learning and memory reactions by increasing the turnover of the excitatory neurotransmitter glutamate (By similarity).</text>
</comment>
<comment type="catalytic activity">
    <reaction evidence="7">
        <text>L-glutamate + NAD(+) + H2O = 2-oxoglutarate + NH4(+) + NADH + H(+)</text>
        <dbReference type="Rhea" id="RHEA:15133"/>
        <dbReference type="ChEBI" id="CHEBI:15377"/>
        <dbReference type="ChEBI" id="CHEBI:15378"/>
        <dbReference type="ChEBI" id="CHEBI:16810"/>
        <dbReference type="ChEBI" id="CHEBI:28938"/>
        <dbReference type="ChEBI" id="CHEBI:29985"/>
        <dbReference type="ChEBI" id="CHEBI:57540"/>
        <dbReference type="ChEBI" id="CHEBI:57945"/>
        <dbReference type="EC" id="1.4.1.3"/>
    </reaction>
</comment>
<comment type="catalytic activity">
    <reaction evidence="3">
        <text>L-glutamate + NADP(+) + H2O = 2-oxoglutarate + NH4(+) + NADPH + H(+)</text>
        <dbReference type="Rhea" id="RHEA:11612"/>
        <dbReference type="ChEBI" id="CHEBI:15377"/>
        <dbReference type="ChEBI" id="CHEBI:15378"/>
        <dbReference type="ChEBI" id="CHEBI:16810"/>
        <dbReference type="ChEBI" id="CHEBI:28938"/>
        <dbReference type="ChEBI" id="CHEBI:29985"/>
        <dbReference type="ChEBI" id="CHEBI:57783"/>
        <dbReference type="ChEBI" id="CHEBI:58349"/>
        <dbReference type="EC" id="1.4.1.3"/>
    </reaction>
</comment>
<comment type="activity regulation">
    <text evidence="3 5">Subject to allosteric regulation. Activated by ADP. Inhibited by GTP and ATP. ADP can occupy the NADH binding site and activate the enzyme. Inhibited by SIRT4 (By similarity). Inhibited by HADH (By similarity).</text>
</comment>
<comment type="subunit">
    <text evidence="2 5">Homohexamer (By similarity). Interacts with HADH; this interaction inhibits the activation of GLUD1 (By similarity).</text>
</comment>
<comment type="subcellular location">
    <subcellularLocation>
        <location evidence="3">Mitochondrion</location>
    </subcellularLocation>
    <subcellularLocation>
        <location evidence="3">Endoplasmic reticulum</location>
    </subcellularLocation>
    <text evidence="3">Mostly translocates into the mitochondria, only a small amount of the protein localizes to the endoplasmic reticulum.</text>
</comment>
<comment type="tissue specificity">
    <text evidence="7">Liver, brain and thyroid.</text>
</comment>
<comment type="PTM">
    <text evidence="3">ADP-ribosylated by SIRT4, leading to inactivate glutamate dehydrogenase activity. Stoichiometry shows that ADP-ribosylation occurs in one subunit per catalytically active homohexamer.</text>
</comment>
<comment type="similarity">
    <text evidence="9">Belongs to the Glu/Leu/Phe/Val dehydrogenases family.</text>
</comment>
<sequence length="558" mass="61308">MYRCLGEALLLSRAGPAALGSAAADSAALLGRTRGQPATAPQPGLAPPARRHYSEAAADREDDPNFFKMVEGFFDRGASIVEDKLVEDLKTRESEEQKRNRVRGILRIIKPCNHVLSLSFPIRRDDGSWEVIEGYRAQHSQHRTPCKGGIRYSTDVSVDEVKALASLMTYKCAVVDVPFGGAKAGVKINPKNYTDNELEKITRRFTMELAKKGFIGPGIDVPAPDMSTGEREMSWIADTYASTIGHYDINAHACVTGKPISQGGIHGRISATGRGVFHGIENFINEASYMSILGMTPGFGDKTFVVQGFGNVGLHSMRYLHRFGAKCVGVGESDGSIWNPDGIDPKELEDFKLQHGTILGFPKAKIYEGSILEADCDILIPAASEKQLTKSNAPRVKAKIIAEGANGPTTPEADKIFLERNIMVIPDLYLNAGGVTVSYFEWLKNLNHVSYGRLTFKYERDSNYHLLMSVQESLERKFGKHGGTIPIVPTAEFQDRISGASEKDIVHSGLAYTMERSARQIMRTAMKYNLGLDLRTAAYVNAIEKVFKVYNEAGVTFT</sequence>
<keyword id="KW-0007">Acetylation</keyword>
<keyword id="KW-0013">ADP-ribosylation</keyword>
<keyword id="KW-0067">ATP-binding</keyword>
<keyword id="KW-0903">Direct protein sequencing</keyword>
<keyword id="KW-0256">Endoplasmic reticulum</keyword>
<keyword id="KW-0342">GTP-binding</keyword>
<keyword id="KW-0379">Hydroxylation</keyword>
<keyword id="KW-0496">Mitochondrion</keyword>
<keyword id="KW-0520">NAD</keyword>
<keyword id="KW-0521">NADP</keyword>
<keyword id="KW-0547">Nucleotide-binding</keyword>
<keyword id="KW-0560">Oxidoreductase</keyword>
<keyword id="KW-0597">Phosphoprotein</keyword>
<keyword id="KW-1185">Reference proteome</keyword>
<keyword id="KW-0809">Transit peptide</keyword>
<feature type="transit peptide" description="Mitochondrion" evidence="3">
    <location>
        <begin position="1"/>
        <end position="53"/>
    </location>
</feature>
<feature type="chain" id="PRO_0000182741" description="Glutamate dehydrogenase 1, mitochondrial">
    <location>
        <begin position="54"/>
        <end position="558"/>
    </location>
</feature>
<feature type="region of interest" description="Disordered" evidence="6">
    <location>
        <begin position="34"/>
        <end position="58"/>
    </location>
</feature>
<feature type="active site" evidence="4">
    <location>
        <position position="183"/>
    </location>
</feature>
<feature type="binding site" evidence="2">
    <location>
        <begin position="141"/>
        <end position="143"/>
    </location>
    <ligand>
        <name>NAD(+)</name>
        <dbReference type="ChEBI" id="CHEBI:57540"/>
    </ligand>
</feature>
<feature type="binding site" evidence="2">
    <location>
        <position position="147"/>
    </location>
    <ligand>
        <name>substrate</name>
    </ligand>
</feature>
<feature type="binding site" evidence="2">
    <location>
        <position position="171"/>
    </location>
    <ligand>
        <name>substrate</name>
    </ligand>
</feature>
<feature type="binding site" evidence="2">
    <location>
        <position position="176"/>
    </location>
    <ligand>
        <name>NAD(+)</name>
        <dbReference type="ChEBI" id="CHEBI:57540"/>
    </ligand>
</feature>
<feature type="binding site" evidence="2">
    <location>
        <position position="252"/>
    </location>
    <ligand>
        <name>NAD(+)</name>
        <dbReference type="ChEBI" id="CHEBI:57540"/>
    </ligand>
</feature>
<feature type="binding site" evidence="2">
    <location>
        <position position="266"/>
    </location>
    <ligand>
        <name>GTP</name>
        <dbReference type="ChEBI" id="CHEBI:37565"/>
    </ligand>
</feature>
<feature type="binding site" evidence="2">
    <location>
        <position position="270"/>
    </location>
    <ligand>
        <name>GTP</name>
        <dbReference type="ChEBI" id="CHEBI:37565"/>
    </ligand>
</feature>
<feature type="binding site" evidence="2">
    <location>
        <position position="319"/>
    </location>
    <ligand>
        <name>GTP</name>
        <dbReference type="ChEBI" id="CHEBI:37565"/>
    </ligand>
</feature>
<feature type="binding site" evidence="2">
    <location>
        <position position="322"/>
    </location>
    <ligand>
        <name>GTP</name>
        <dbReference type="ChEBI" id="CHEBI:37565"/>
    </ligand>
</feature>
<feature type="binding site" evidence="2">
    <location>
        <position position="438"/>
    </location>
    <ligand>
        <name>substrate</name>
    </ligand>
</feature>
<feature type="binding site" evidence="2">
    <location>
        <position position="444"/>
    </location>
    <ligand>
        <name>NAD(+)</name>
        <dbReference type="ChEBI" id="CHEBI:57540"/>
    </ligand>
</feature>
<feature type="binding site" evidence="2">
    <location>
        <position position="450"/>
    </location>
    <ligand>
        <name>ADP</name>
        <dbReference type="ChEBI" id="CHEBI:456216"/>
    </ligand>
</feature>
<feature type="binding site" evidence="2">
    <location>
        <position position="516"/>
    </location>
    <ligand>
        <name>ADP</name>
        <dbReference type="ChEBI" id="CHEBI:456216"/>
    </ligand>
</feature>
<feature type="modified residue" description="N6-succinyllysine" evidence="5">
    <location>
        <position position="68"/>
    </location>
</feature>
<feature type="modified residue" description="Phosphoserine" evidence="4">
    <location>
        <position position="79"/>
    </location>
</feature>
<feature type="modified residue" description="N6-acetyllysine; alternate" evidence="2">
    <location>
        <position position="84"/>
    </location>
</feature>
<feature type="modified residue" description="N6-succinyllysine; alternate" evidence="2">
    <location>
        <position position="84"/>
    </location>
</feature>
<feature type="modified residue" description="N6-acetyllysine" evidence="2">
    <location>
        <position position="90"/>
    </location>
</feature>
<feature type="modified residue" description="N6-acetyllysine; alternate" evidence="2">
    <location>
        <position position="110"/>
    </location>
</feature>
<feature type="modified residue" description="N6-succinyllysine; alternate" evidence="2">
    <location>
        <position position="110"/>
    </location>
</feature>
<feature type="modified residue" description="Phosphoserine" evidence="4">
    <location>
        <position position="128"/>
    </location>
</feature>
<feature type="modified residue" description="Phosphotyrosine" evidence="5">
    <location>
        <position position="135"/>
    </location>
</feature>
<feature type="modified residue" description="N6-(2-hydroxyisobutyryl)lysine" evidence="3">
    <location>
        <position position="147"/>
    </location>
</feature>
<feature type="modified residue" description="N6-acetyllysine; alternate" evidence="2">
    <location>
        <position position="162"/>
    </location>
</feature>
<feature type="modified residue" description="N6-succinyllysine; alternate" evidence="2">
    <location>
        <position position="162"/>
    </location>
</feature>
<feature type="modified residue" description="N6-acetyllysine" evidence="5">
    <location>
        <position position="171"/>
    </location>
</feature>
<feature type="modified residue" description="ADP-ribosylcysteine" evidence="3">
    <location>
        <position position="172"/>
    </location>
</feature>
<feature type="modified residue" description="N6-acetyllysine; alternate" evidence="2">
    <location>
        <position position="183"/>
    </location>
</feature>
<feature type="modified residue" description="N6-succinyllysine; alternate" evidence="5">
    <location>
        <position position="183"/>
    </location>
</feature>
<feature type="modified residue" description="N6-acetyllysine" evidence="5">
    <location>
        <position position="187"/>
    </location>
</feature>
<feature type="modified residue" description="N6-acetyllysine; alternate" evidence="2">
    <location>
        <position position="191"/>
    </location>
</feature>
<feature type="modified residue" description="N6-succinyllysine; alternate" evidence="5">
    <location>
        <position position="191"/>
    </location>
</feature>
<feature type="modified residue" description="N6-succinyllysine" evidence="5">
    <location>
        <position position="200"/>
    </location>
</feature>
<feature type="modified residue" description="N6-acetyllysine" evidence="5">
    <location>
        <position position="211"/>
    </location>
</feature>
<feature type="modified residue" description="Phosphoserine" evidence="3">
    <location>
        <position position="227"/>
    </location>
</feature>
<feature type="modified residue" description="N6-acetyllysine" evidence="5">
    <location>
        <position position="326"/>
    </location>
</feature>
<feature type="modified residue" description="N6-acetyllysine; alternate" evidence="5">
    <location>
        <position position="346"/>
    </location>
</feature>
<feature type="modified residue" description="N6-succinyllysine; alternate" evidence="5">
    <location>
        <position position="346"/>
    </location>
</feature>
<feature type="modified residue" description="N6-acetyllysine; alternate" evidence="5">
    <location>
        <position position="352"/>
    </location>
</feature>
<feature type="modified residue" description="N6-succinyllysine; alternate" evidence="5">
    <location>
        <position position="352"/>
    </location>
</feature>
<feature type="modified residue" description="N6-acetyllysine; alternate" evidence="2">
    <location>
        <position position="363"/>
    </location>
</feature>
<feature type="modified residue" description="N6-succinyllysine; alternate" evidence="2">
    <location>
        <position position="363"/>
    </location>
</feature>
<feature type="modified residue" description="N6-acetyllysine; alternate" evidence="2">
    <location>
        <position position="365"/>
    </location>
</feature>
<feature type="modified residue" description="N6-succinyllysine; alternate" evidence="5">
    <location>
        <position position="365"/>
    </location>
</feature>
<feature type="modified residue" description="Phosphoserine" evidence="3">
    <location>
        <position position="384"/>
    </location>
</feature>
<feature type="modified residue" description="N6-acetyllysine" evidence="2">
    <location>
        <position position="386"/>
    </location>
</feature>
<feature type="modified residue" description="N6-acetyllysine; alternate" evidence="5">
    <location>
        <position position="390"/>
    </location>
</feature>
<feature type="modified residue" description="N6-succinyllysine; alternate" evidence="5">
    <location>
        <position position="390"/>
    </location>
</feature>
<feature type="modified residue" description="N6-acetyllysine" evidence="2">
    <location>
        <position position="399"/>
    </location>
</feature>
<feature type="modified residue" description="Phosphothreonine" evidence="4">
    <location>
        <position position="410"/>
    </location>
</feature>
<feature type="modified residue" description="N6-acetyllysine; alternate" evidence="2">
    <location>
        <position position="415"/>
    </location>
</feature>
<feature type="modified residue" description="N6-succinyllysine; alternate" evidence="2">
    <location>
        <position position="415"/>
    </location>
</feature>
<feature type="modified residue" description="N6-acetyllysine; alternate" evidence="2">
    <location>
        <position position="457"/>
    </location>
</feature>
<feature type="modified residue" description="N6-malonyllysine; alternate" evidence="1">
    <location>
        <position position="457"/>
    </location>
</feature>
<feature type="modified residue" description="N6-succinyllysine; alternate" evidence="2">
    <location>
        <position position="457"/>
    </location>
</feature>
<feature type="modified residue" description="N6-acetyllysine; alternate" evidence="5">
    <location>
        <position position="477"/>
    </location>
</feature>
<feature type="modified residue" description="N6-succinyllysine; alternate" evidence="5">
    <location>
        <position position="477"/>
    </location>
</feature>
<feature type="modified residue" description="N6-acetyllysine; alternate" evidence="2">
    <location>
        <position position="480"/>
    </location>
</feature>
<feature type="modified residue" description="N6-succinyllysine; alternate" evidence="5">
    <location>
        <position position="480"/>
    </location>
</feature>
<feature type="modified residue" description="N6-acetyllysine; alternate" evidence="2">
    <location>
        <position position="503"/>
    </location>
</feature>
<feature type="modified residue" description="N6-malonyllysine; alternate" evidence="1">
    <location>
        <position position="503"/>
    </location>
</feature>
<feature type="modified residue" description="N6-succinyllysine; alternate" evidence="2">
    <location>
        <position position="503"/>
    </location>
</feature>
<feature type="modified residue" description="Phosphotyrosine" evidence="3">
    <location>
        <position position="512"/>
    </location>
</feature>
<feature type="modified residue" description="N6-acetyllysine; alternate" evidence="2">
    <location>
        <position position="527"/>
    </location>
</feature>
<feature type="modified residue" description="N6-malonyllysine; alternate" evidence="1">
    <location>
        <position position="527"/>
    </location>
</feature>
<feature type="modified residue" description="N6-succinyllysine; alternate" evidence="2">
    <location>
        <position position="527"/>
    </location>
</feature>
<feature type="modified residue" description="N6-acetyllysine; alternate" evidence="2">
    <location>
        <position position="545"/>
    </location>
</feature>
<feature type="modified residue" description="N6-succinyllysine; alternate" evidence="2">
    <location>
        <position position="545"/>
    </location>
</feature>
<feature type="modified residue" description="N6-acetyllysine" evidence="5">
    <location>
        <position position="548"/>
    </location>
</feature>
<proteinExistence type="evidence at protein level"/>
<evidence type="ECO:0000250" key="1"/>
<evidence type="ECO:0000250" key="2">
    <source>
        <dbReference type="UniProtKB" id="P00366"/>
    </source>
</evidence>
<evidence type="ECO:0000250" key="3">
    <source>
        <dbReference type="UniProtKB" id="P00367"/>
    </source>
</evidence>
<evidence type="ECO:0000250" key="4">
    <source>
        <dbReference type="UniProtKB" id="P10860"/>
    </source>
</evidence>
<evidence type="ECO:0000250" key="5">
    <source>
        <dbReference type="UniProtKB" id="P26443"/>
    </source>
</evidence>
<evidence type="ECO:0000256" key="6">
    <source>
        <dbReference type="SAM" id="MobiDB-lite"/>
    </source>
</evidence>
<evidence type="ECO:0000269" key="7">
    <source>
    </source>
</evidence>
<evidence type="ECO:0000303" key="8">
    <source>
    </source>
</evidence>
<evidence type="ECO:0000305" key="9"/>
<gene>
    <name type="primary">GLUD1</name>
    <name type="synonym">GLUD</name>
</gene>
<accession>P42174</accession>
<organism>
    <name type="scientific">Sus scrofa</name>
    <name type="common">Pig</name>
    <dbReference type="NCBI Taxonomy" id="9823"/>
    <lineage>
        <taxon>Eukaryota</taxon>
        <taxon>Metazoa</taxon>
        <taxon>Chordata</taxon>
        <taxon>Craniata</taxon>
        <taxon>Vertebrata</taxon>
        <taxon>Euteleostomi</taxon>
        <taxon>Mammalia</taxon>
        <taxon>Eutheria</taxon>
        <taxon>Laurasiatheria</taxon>
        <taxon>Artiodactyla</taxon>
        <taxon>Suina</taxon>
        <taxon>Suidae</taxon>
        <taxon>Sus</taxon>
    </lineage>
</organism>
<dbReference type="EC" id="1.4.1.3" evidence="7"/>
<dbReference type="EMBL" id="AEMK02000096">
    <property type="status" value="NOT_ANNOTATED_CDS"/>
    <property type="molecule type" value="Genomic_DNA"/>
</dbReference>
<dbReference type="PIR" id="S39010">
    <property type="entry name" value="S39010"/>
</dbReference>
<dbReference type="RefSeq" id="NP_001231430.1">
    <property type="nucleotide sequence ID" value="NM_001244501.2"/>
</dbReference>
<dbReference type="SMR" id="P42174"/>
<dbReference type="FunCoup" id="P42174">
    <property type="interactions" value="1133"/>
</dbReference>
<dbReference type="STRING" id="9823.ENSSSCP00000011056"/>
<dbReference type="GlyGen" id="P42174">
    <property type="glycosylation" value="1 site"/>
</dbReference>
<dbReference type="PeptideAtlas" id="P42174"/>
<dbReference type="Ensembl" id="ENSSSCT00025034039.1">
    <property type="protein sequence ID" value="ENSSSCP00025014172.1"/>
    <property type="gene ID" value="ENSSSCG00025025117.1"/>
</dbReference>
<dbReference type="Ensembl" id="ENSSSCT00030091528.1">
    <property type="protein sequence ID" value="ENSSSCP00030042102.1"/>
    <property type="gene ID" value="ENSSSCG00030065447.1"/>
</dbReference>
<dbReference type="Ensembl" id="ENSSSCT00035079984.1">
    <property type="protein sequence ID" value="ENSSSCP00035032921.1"/>
    <property type="gene ID" value="ENSSSCG00035059666.1"/>
</dbReference>
<dbReference type="Ensembl" id="ENSSSCT00045058193.1">
    <property type="protein sequence ID" value="ENSSSCP00045040681.1"/>
    <property type="gene ID" value="ENSSSCG00045033938.1"/>
</dbReference>
<dbReference type="Ensembl" id="ENSSSCT00050091367.1">
    <property type="protein sequence ID" value="ENSSSCP00050039305.1"/>
    <property type="gene ID" value="ENSSSCG00050067038.1"/>
</dbReference>
<dbReference type="Ensembl" id="ENSSSCT00055054205.1">
    <property type="protein sequence ID" value="ENSSSCP00055043253.1"/>
    <property type="gene ID" value="ENSSSCG00055027367.1"/>
</dbReference>
<dbReference type="Ensembl" id="ENSSSCT00060082867.1">
    <property type="protein sequence ID" value="ENSSSCP00060035914.1"/>
    <property type="gene ID" value="ENSSSCG00060060739.1"/>
</dbReference>
<dbReference type="Ensembl" id="ENSSSCT00065050932.1">
    <property type="protein sequence ID" value="ENSSSCP00065022079.1"/>
    <property type="gene ID" value="ENSSSCG00065037327.1"/>
</dbReference>
<dbReference type="Ensembl" id="ENSSSCT00070048400.1">
    <property type="protein sequence ID" value="ENSSSCP00070040872.1"/>
    <property type="gene ID" value="ENSSSCG00070024230.1"/>
</dbReference>
<dbReference type="Ensembl" id="ENSSSCT00090028071">
    <property type="protein sequence ID" value="ENSSSCP00090017228"/>
    <property type="gene ID" value="ENSSSCG00090015984"/>
</dbReference>
<dbReference type="Ensembl" id="ENSSSCT00105061332">
    <property type="protein sequence ID" value="ENSSSCP00105043595"/>
    <property type="gene ID" value="ENSSSCG00105032128"/>
</dbReference>
<dbReference type="Ensembl" id="ENSSSCT00115018447">
    <property type="protein sequence ID" value="ENSSSCP00115017427"/>
    <property type="gene ID" value="ENSSSCG00115010619"/>
</dbReference>
<dbReference type="Ensembl" id="ENSSSCT00130019689">
    <property type="protein sequence ID" value="ENSSSCP00130013502"/>
    <property type="gene ID" value="ENSSSCG00130010393"/>
</dbReference>
<dbReference type="GeneID" id="100157162"/>
<dbReference type="KEGG" id="ssc:100157162"/>
<dbReference type="CTD" id="2746"/>
<dbReference type="eggNOG" id="KOG2250">
    <property type="taxonomic scope" value="Eukaryota"/>
</dbReference>
<dbReference type="InParanoid" id="P42174"/>
<dbReference type="OrthoDB" id="6718861at2759"/>
<dbReference type="Reactome" id="R-SSC-2151201">
    <property type="pathway name" value="Transcriptional activation of mitochondrial biogenesis"/>
</dbReference>
<dbReference type="Reactome" id="R-SSC-8964539">
    <property type="pathway name" value="Glutamate and glutamine metabolism"/>
</dbReference>
<dbReference type="Reactome" id="R-SSC-9837999">
    <property type="pathway name" value="Mitochondrial protein degradation"/>
</dbReference>
<dbReference type="Proteomes" id="UP000008227">
    <property type="component" value="Unplaced"/>
</dbReference>
<dbReference type="Proteomes" id="UP000314985">
    <property type="component" value="Chromosome 14"/>
</dbReference>
<dbReference type="Proteomes" id="UP000694570">
    <property type="component" value="Unplaced"/>
</dbReference>
<dbReference type="Proteomes" id="UP000694571">
    <property type="component" value="Unplaced"/>
</dbReference>
<dbReference type="Proteomes" id="UP000694720">
    <property type="component" value="Unplaced"/>
</dbReference>
<dbReference type="Proteomes" id="UP000694722">
    <property type="component" value="Unplaced"/>
</dbReference>
<dbReference type="Proteomes" id="UP000694723">
    <property type="component" value="Unplaced"/>
</dbReference>
<dbReference type="Proteomes" id="UP000694724">
    <property type="component" value="Unplaced"/>
</dbReference>
<dbReference type="Proteomes" id="UP000694725">
    <property type="component" value="Unplaced"/>
</dbReference>
<dbReference type="Proteomes" id="UP000694726">
    <property type="component" value="Unplaced"/>
</dbReference>
<dbReference type="Proteomes" id="UP000694727">
    <property type="component" value="Unplaced"/>
</dbReference>
<dbReference type="Proteomes" id="UP000694728">
    <property type="component" value="Unplaced"/>
</dbReference>
<dbReference type="Bgee" id="ENSSSCG00000010368">
    <property type="expression patterns" value="Expressed in Ammon's horn and 43 other cell types or tissues"/>
</dbReference>
<dbReference type="ExpressionAtlas" id="P42174">
    <property type="expression patterns" value="baseline and differential"/>
</dbReference>
<dbReference type="GO" id="GO:0005783">
    <property type="term" value="C:endoplasmic reticulum"/>
    <property type="evidence" value="ECO:0000250"/>
    <property type="project" value="UniProtKB"/>
</dbReference>
<dbReference type="GO" id="GO:0005739">
    <property type="term" value="C:mitochondrion"/>
    <property type="evidence" value="ECO:0000250"/>
    <property type="project" value="UniProtKB"/>
</dbReference>
<dbReference type="GO" id="GO:0005524">
    <property type="term" value="F:ATP binding"/>
    <property type="evidence" value="ECO:0007669"/>
    <property type="project" value="UniProtKB-KW"/>
</dbReference>
<dbReference type="GO" id="GO:0004352">
    <property type="term" value="F:glutamate dehydrogenase (NAD+) activity"/>
    <property type="evidence" value="ECO:0000318"/>
    <property type="project" value="GO_Central"/>
</dbReference>
<dbReference type="GO" id="GO:0004354">
    <property type="term" value="F:glutamate dehydrogenase (NADP+) activity"/>
    <property type="evidence" value="ECO:0007669"/>
    <property type="project" value="RHEA"/>
</dbReference>
<dbReference type="GO" id="GO:0004353">
    <property type="term" value="F:glutamate dehydrogenase [NAD(P)+] activity"/>
    <property type="evidence" value="ECO:0000250"/>
    <property type="project" value="UniProtKB"/>
</dbReference>
<dbReference type="GO" id="GO:0005525">
    <property type="term" value="F:GTP binding"/>
    <property type="evidence" value="ECO:0007669"/>
    <property type="project" value="UniProtKB-KW"/>
</dbReference>
<dbReference type="GO" id="GO:0006538">
    <property type="term" value="P:glutamate catabolic process"/>
    <property type="evidence" value="ECO:0000318"/>
    <property type="project" value="GO_Central"/>
</dbReference>
<dbReference type="GO" id="GO:0006541">
    <property type="term" value="P:glutamine metabolic process"/>
    <property type="evidence" value="ECO:0000250"/>
    <property type="project" value="UniProtKB"/>
</dbReference>
<dbReference type="GO" id="GO:0072350">
    <property type="term" value="P:tricarboxylic acid metabolic process"/>
    <property type="evidence" value="ECO:0000250"/>
    <property type="project" value="UniProtKB"/>
</dbReference>
<dbReference type="CDD" id="cd01076">
    <property type="entry name" value="NAD_bind_1_Glu_DH"/>
    <property type="match status" value="1"/>
</dbReference>
<dbReference type="FunFam" id="1.10.287.140:FF:000001">
    <property type="entry name" value="Glutamate dehydrogenase 1, mitochondrial"/>
    <property type="match status" value="1"/>
</dbReference>
<dbReference type="FunFam" id="3.40.50.10860:FF:000007">
    <property type="entry name" value="Glutamate dehydrogenase 1, mitochondrial"/>
    <property type="match status" value="1"/>
</dbReference>
<dbReference type="FunFam" id="3.40.50.720:FF:000100">
    <property type="entry name" value="Glutamate dehydrogenase 1, mitochondrial"/>
    <property type="match status" value="1"/>
</dbReference>
<dbReference type="Gene3D" id="1.10.287.140">
    <property type="match status" value="1"/>
</dbReference>
<dbReference type="Gene3D" id="3.40.50.10860">
    <property type="entry name" value="Leucine Dehydrogenase, chain A, domain 1"/>
    <property type="match status" value="1"/>
</dbReference>
<dbReference type="Gene3D" id="3.40.50.720">
    <property type="entry name" value="NAD(P)-binding Rossmann-like Domain"/>
    <property type="match status" value="1"/>
</dbReference>
<dbReference type="InterPro" id="IPR046346">
    <property type="entry name" value="Aminoacid_DH-like_N_sf"/>
</dbReference>
<dbReference type="InterPro" id="IPR006095">
    <property type="entry name" value="Glu/Leu/Phe/Val/Trp_DH"/>
</dbReference>
<dbReference type="InterPro" id="IPR006096">
    <property type="entry name" value="Glu/Leu/Phe/Val/Trp_DH_C"/>
</dbReference>
<dbReference type="InterPro" id="IPR006097">
    <property type="entry name" value="Glu/Leu/Phe/Val/Trp_DH_dimer"/>
</dbReference>
<dbReference type="InterPro" id="IPR033524">
    <property type="entry name" value="Glu/Leu/Phe/Val_DH_AS"/>
</dbReference>
<dbReference type="InterPro" id="IPR036291">
    <property type="entry name" value="NAD(P)-bd_dom_sf"/>
</dbReference>
<dbReference type="InterPro" id="IPR033922">
    <property type="entry name" value="NAD_bind_Glu_DH"/>
</dbReference>
<dbReference type="PANTHER" id="PTHR11606">
    <property type="entry name" value="GLUTAMATE DEHYDROGENASE"/>
    <property type="match status" value="1"/>
</dbReference>
<dbReference type="PANTHER" id="PTHR11606:SF13">
    <property type="entry name" value="GLUTAMATE DEHYDROGENASE 1, MITOCHONDRIAL"/>
    <property type="match status" value="1"/>
</dbReference>
<dbReference type="Pfam" id="PF00208">
    <property type="entry name" value="ELFV_dehydrog"/>
    <property type="match status" value="1"/>
</dbReference>
<dbReference type="Pfam" id="PF02812">
    <property type="entry name" value="ELFV_dehydrog_N"/>
    <property type="match status" value="1"/>
</dbReference>
<dbReference type="PRINTS" id="PR00082">
    <property type="entry name" value="GLFDHDRGNASE"/>
</dbReference>
<dbReference type="SMART" id="SM00839">
    <property type="entry name" value="ELFV_dehydrog"/>
    <property type="match status" value="1"/>
</dbReference>
<dbReference type="SUPFAM" id="SSF53223">
    <property type="entry name" value="Aminoacid dehydrogenase-like, N-terminal domain"/>
    <property type="match status" value="1"/>
</dbReference>
<dbReference type="SUPFAM" id="SSF51735">
    <property type="entry name" value="NAD(P)-binding Rossmann-fold domains"/>
    <property type="match status" value="1"/>
</dbReference>
<dbReference type="PROSITE" id="PS00074">
    <property type="entry name" value="GLFV_DEHYDROGENASE"/>
    <property type="match status" value="1"/>
</dbReference>
<reference key="1">
    <citation type="submission" date="2009-11" db="EMBL/GenBank/DDBJ databases">
        <authorList>
            <consortium name="Porcine genome sequencing project"/>
        </authorList>
    </citation>
    <scope>NUCLEOTIDE SEQUENCE [LARGE SCALE GENOMIC DNA]</scope>
</reference>
<reference key="2">
    <citation type="journal article" date="1993" name="Biochem. J.">
        <title>A membrane-bound form of glutamate dehydrogenase possesses an ATP-dependent high-affinity microtubule-binding activity.</title>
        <authorList>
            <person name="Rajas F."/>
            <person name="Rousset B."/>
        </authorList>
    </citation>
    <scope>PROTEIN SEQUENCE OF 54-73 AND 364-381</scope>
    <scope>CATALYTIC ACTIVITY</scope>
    <scope>FUNCTION</scope>
    <scope>TISSUE SPECIFICITY</scope>
</reference>
<name>DHE3_PIG</name>
<protein>
    <recommendedName>
        <fullName>Glutamate dehydrogenase 1, mitochondrial</fullName>
        <shortName>GDH 1</shortName>
        <ecNumber evidence="7">1.4.1.3</ecNumber>
    </recommendedName>
    <alternativeName>
        <fullName evidence="8">Membrane protein 50</fullName>
        <shortName evidence="8">MP50</shortName>
    </alternativeName>
</protein>